<name>PHTF1_MOUSE</name>
<accession>Q9QZ09</accession>
<accession>Q9CS51</accession>
<accession>Q9CSB9</accession>
<accession>Q9QZ14</accession>
<protein>
    <recommendedName>
        <fullName evidence="8">Protein PHTF1</fullName>
    </recommendedName>
</protein>
<sequence length="761" mass="86779">MASNERDAISWYQKKIGAYDQQIWEKSIEQTQIKGFKNKPKKMGHIKPDLIDVDLIRGSTFAKAKPEIPWTSLTRKGLVRVVFFPLFSSWWIQVTSLRIFVWLLLLYLMQVTAVVLYLLMPIVSASEVLGPLCLMLLMGTVHCQIVSTQITRPSGNNGNRRRRKLRKTVNGDGSRDNGNNSPDKVRAVETLESASSVGGFWGTLFGNRIKRVKLVSNKGTETDNDSGCFHPILKKRQGRPEIRMWQAREKAKVSDGEKCRREAYRRLGNGISDDLSSEEDGEARTQMILLRRSVEGASSDNGYEVKNRRSILSRHLNSQVKKTTRWCHIVRDSDSLAESEFESAVFSQGSRSGMSGGSRSLNLSRRDSESTRHDSETEDMLWDDLLHGPECRSSVTSDSEGAHVNTIHSGTKRDPKEDVFQQNHLFWLQNSSPASERVSAIIWEGNECKKMDMSVLEISGIIMSRVNAYEQGVGYQMLGNAVTVGLALFPFLYRLFREKSFDQLKSISAEEVLTLFCGAPPVTPVVILSIINFIERLCLTWMFFFMMCVAERTYKQRFLFAKLFSHITSARKARKYEIPHFRLKKVENIKIWLSLRSYLKRRGPQRSVDVVVSSVFLLTLSIAFICCAQVLQGHKTFLNDAYNWEFLIWETALLLFLLRLASLGSETNKKYSNVSILLTEQINLYLKMEKKPNKKEQLTLVNNVLKLSTKLLKELDTPFRLYGLTMNPLIYNITRVVILSAVSGVISDLLGFNIRLWKIKS</sequence>
<organism>
    <name type="scientific">Mus musculus</name>
    <name type="common">Mouse</name>
    <dbReference type="NCBI Taxonomy" id="10090"/>
    <lineage>
        <taxon>Eukaryota</taxon>
        <taxon>Metazoa</taxon>
        <taxon>Chordata</taxon>
        <taxon>Craniata</taxon>
        <taxon>Vertebrata</taxon>
        <taxon>Euteleostomi</taxon>
        <taxon>Mammalia</taxon>
        <taxon>Eutheria</taxon>
        <taxon>Euarchontoglires</taxon>
        <taxon>Glires</taxon>
        <taxon>Rodentia</taxon>
        <taxon>Myomorpha</taxon>
        <taxon>Muroidea</taxon>
        <taxon>Muridae</taxon>
        <taxon>Murinae</taxon>
        <taxon>Mus</taxon>
        <taxon>Mus</taxon>
    </lineage>
</organism>
<evidence type="ECO:0000250" key="1">
    <source>
        <dbReference type="UniProtKB" id="F1M8G0"/>
    </source>
</evidence>
<evidence type="ECO:0000250" key="2">
    <source>
        <dbReference type="UniProtKB" id="Q9UMS5"/>
    </source>
</evidence>
<evidence type="ECO:0000255" key="3"/>
<evidence type="ECO:0000256" key="4">
    <source>
        <dbReference type="SAM" id="MobiDB-lite"/>
    </source>
</evidence>
<evidence type="ECO:0000269" key="5">
    <source>
    </source>
</evidence>
<evidence type="ECO:0000269" key="6">
    <source>
    </source>
</evidence>
<evidence type="ECO:0000303" key="7">
    <source>
    </source>
</evidence>
<evidence type="ECO:0000305" key="8"/>
<evidence type="ECO:0000312" key="9">
    <source>
        <dbReference type="MGI" id="MGI:1332671"/>
    </source>
</evidence>
<evidence type="ECO:0007744" key="10">
    <source>
    </source>
</evidence>
<feature type="chain" id="PRO_0000127424" description="Protein PHTF1">
    <location>
        <begin position="1"/>
        <end position="761"/>
    </location>
</feature>
<feature type="transmembrane region" description="Helical" evidence="3">
    <location>
        <begin position="77"/>
        <end position="97"/>
    </location>
</feature>
<feature type="transmembrane region" description="Helical" evidence="3">
    <location>
        <begin position="99"/>
        <end position="119"/>
    </location>
</feature>
<feature type="transmembrane region" description="Helical" evidence="3">
    <location>
        <begin position="121"/>
        <end position="141"/>
    </location>
</feature>
<feature type="transmembrane region" description="Helical" evidence="3">
    <location>
        <begin position="472"/>
        <end position="492"/>
    </location>
</feature>
<feature type="transmembrane region" description="Helical" evidence="3">
    <location>
        <begin position="514"/>
        <end position="534"/>
    </location>
</feature>
<feature type="transmembrane region" description="Helical" evidence="3">
    <location>
        <begin position="610"/>
        <end position="630"/>
    </location>
</feature>
<feature type="transmembrane region" description="Helical" evidence="3">
    <location>
        <begin position="644"/>
        <end position="664"/>
    </location>
</feature>
<feature type="transmembrane region" description="Helical" evidence="3">
    <location>
        <begin position="736"/>
        <end position="756"/>
    </location>
</feature>
<feature type="domain" description="PHTF" evidence="3">
    <location>
        <begin position="6"/>
        <end position="150"/>
    </location>
</feature>
<feature type="region of interest" description="Disordered" evidence="4">
    <location>
        <begin position="152"/>
        <end position="184"/>
    </location>
</feature>
<feature type="region of interest" description="Disordered" evidence="4">
    <location>
        <begin position="345"/>
        <end position="414"/>
    </location>
</feature>
<feature type="compositionally biased region" description="Low complexity" evidence="4">
    <location>
        <begin position="170"/>
        <end position="181"/>
    </location>
</feature>
<feature type="compositionally biased region" description="Low complexity" evidence="4">
    <location>
        <begin position="347"/>
        <end position="363"/>
    </location>
</feature>
<feature type="compositionally biased region" description="Basic and acidic residues" evidence="4">
    <location>
        <begin position="364"/>
        <end position="375"/>
    </location>
</feature>
<feature type="modified residue" description="Phosphoserine" evidence="10">
    <location>
        <position position="272"/>
    </location>
</feature>
<feature type="modified residue" description="Phosphoserine" evidence="10">
    <location>
        <position position="276"/>
    </location>
</feature>
<feature type="modified residue" description="Phosphoserine" evidence="10">
    <location>
        <position position="277"/>
    </location>
</feature>
<feature type="modified residue" description="Phosphoserine" evidence="10">
    <location>
        <position position="333"/>
    </location>
</feature>
<feature type="modified residue" description="Phosphoserine" evidence="10">
    <location>
        <position position="335"/>
    </location>
</feature>
<feature type="glycosylation site" description="N-linked (GlcNAc...) asparagine" evidence="3">
    <location>
        <position position="179"/>
    </location>
</feature>
<feature type="glycosylation site" description="N-linked (GlcNAc...) asparagine" evidence="3">
    <location>
        <position position="224"/>
    </location>
</feature>
<feature type="glycosylation site" description="N-linked (GlcNAc...) asparagine" evidence="3">
    <location>
        <position position="362"/>
    </location>
</feature>
<feature type="glycosylation site" description="N-linked (GlcNAc...) asparagine" evidence="3">
    <location>
        <position position="430"/>
    </location>
</feature>
<feature type="glycosylation site" description="N-linked (GlcNAc...) asparagine" evidence="3">
    <location>
        <position position="673"/>
    </location>
</feature>
<feature type="glycosylation site" description="N-linked (GlcNAc...) asparagine" evidence="3">
    <location>
        <position position="732"/>
    </location>
</feature>
<feature type="sequence conflict" description="In Ref. 1; CAB62242." evidence="8" ref="1">
    <original>N</original>
    <variation>T</variation>
    <location>
        <position position="156"/>
    </location>
</feature>
<feature type="sequence conflict" description="In Ref. 2; BAB31567." evidence="8" ref="2">
    <original>R</original>
    <variation>G</variation>
    <location>
        <position position="497"/>
    </location>
</feature>
<feature type="sequence conflict" description="In Ref. 2; BAB31567." evidence="8" ref="2">
    <original>LL</original>
    <variation>FV</variation>
    <location>
        <begin position="657"/>
        <end position="658"/>
    </location>
</feature>
<keyword id="KW-0256">Endoplasmic reticulum</keyword>
<keyword id="KW-0325">Glycoprotein</keyword>
<keyword id="KW-0333">Golgi apparatus</keyword>
<keyword id="KW-0472">Membrane</keyword>
<keyword id="KW-0597">Phosphoprotein</keyword>
<keyword id="KW-1185">Reference proteome</keyword>
<keyword id="KW-0812">Transmembrane</keyword>
<keyword id="KW-1133">Transmembrane helix</keyword>
<proteinExistence type="evidence at protein level"/>
<comment type="subunit">
    <text evidence="6">Interacts with FEM1B.</text>
</comment>
<comment type="subcellular location">
    <subcellularLocation>
        <location evidence="1">Endoplasmic reticulum membrane</location>
        <topology evidence="3">Multi-pass membrane protein</topology>
    </subcellularLocation>
    <subcellularLocation>
        <location evidence="1">Golgi apparatus</location>
        <location evidence="1">cis-Golgi network membrane</location>
        <topology evidence="3">Multi-pass membrane protein</topology>
    </subcellularLocation>
</comment>
<comment type="tissue specificity">
    <text evidence="5">Widely expressed with highest levels in testis.</text>
</comment>
<comment type="caution">
    <text evidence="1 2">The PHTF domain was initially defined as an atypical homeodomain, suggesting that this protein could act as a transcription regulator (By similarity). However, the protein is not found in the nucleus and mainly localizes in the endoplasmic reticulum membrane, suggesting that it does not act as a transcription factor (By similarity).</text>
</comment>
<reference key="1">
    <citation type="journal article" date="2000" name="Genomics">
        <title>Molecular characterization of a novel gene family (PHTF) conserved from Drosophila to mammals.</title>
        <authorList>
            <person name="Manuel A."/>
            <person name="Beaupain D."/>
            <person name="Romeo P.-H."/>
            <person name="Raich N."/>
        </authorList>
    </citation>
    <scope>NUCLEOTIDE SEQUENCE [MRNA]</scope>
    <scope>TISSUE SPECIFICITY</scope>
    <source>
        <tissue>Testis</tissue>
    </source>
</reference>
<reference key="2">
    <citation type="journal article" date="2005" name="Science">
        <title>The transcriptional landscape of the mammalian genome.</title>
        <authorList>
            <person name="Carninci P."/>
            <person name="Kasukawa T."/>
            <person name="Katayama S."/>
            <person name="Gough J."/>
            <person name="Frith M.C."/>
            <person name="Maeda N."/>
            <person name="Oyama R."/>
            <person name="Ravasi T."/>
            <person name="Lenhard B."/>
            <person name="Wells C."/>
            <person name="Kodzius R."/>
            <person name="Shimokawa K."/>
            <person name="Bajic V.B."/>
            <person name="Brenner S.E."/>
            <person name="Batalov S."/>
            <person name="Forrest A.R."/>
            <person name="Zavolan M."/>
            <person name="Davis M.J."/>
            <person name="Wilming L.G."/>
            <person name="Aidinis V."/>
            <person name="Allen J.E."/>
            <person name="Ambesi-Impiombato A."/>
            <person name="Apweiler R."/>
            <person name="Aturaliya R.N."/>
            <person name="Bailey T.L."/>
            <person name="Bansal M."/>
            <person name="Baxter L."/>
            <person name="Beisel K.W."/>
            <person name="Bersano T."/>
            <person name="Bono H."/>
            <person name="Chalk A.M."/>
            <person name="Chiu K.P."/>
            <person name="Choudhary V."/>
            <person name="Christoffels A."/>
            <person name="Clutterbuck D.R."/>
            <person name="Crowe M.L."/>
            <person name="Dalla E."/>
            <person name="Dalrymple B.P."/>
            <person name="de Bono B."/>
            <person name="Della Gatta G."/>
            <person name="di Bernardo D."/>
            <person name="Down T."/>
            <person name="Engstrom P."/>
            <person name="Fagiolini M."/>
            <person name="Faulkner G."/>
            <person name="Fletcher C.F."/>
            <person name="Fukushima T."/>
            <person name="Furuno M."/>
            <person name="Futaki S."/>
            <person name="Gariboldi M."/>
            <person name="Georgii-Hemming P."/>
            <person name="Gingeras T.R."/>
            <person name="Gojobori T."/>
            <person name="Green R.E."/>
            <person name="Gustincich S."/>
            <person name="Harbers M."/>
            <person name="Hayashi Y."/>
            <person name="Hensch T.K."/>
            <person name="Hirokawa N."/>
            <person name="Hill D."/>
            <person name="Huminiecki L."/>
            <person name="Iacono M."/>
            <person name="Ikeo K."/>
            <person name="Iwama A."/>
            <person name="Ishikawa T."/>
            <person name="Jakt M."/>
            <person name="Kanapin A."/>
            <person name="Katoh M."/>
            <person name="Kawasawa Y."/>
            <person name="Kelso J."/>
            <person name="Kitamura H."/>
            <person name="Kitano H."/>
            <person name="Kollias G."/>
            <person name="Krishnan S.P."/>
            <person name="Kruger A."/>
            <person name="Kummerfeld S.K."/>
            <person name="Kurochkin I.V."/>
            <person name="Lareau L.F."/>
            <person name="Lazarevic D."/>
            <person name="Lipovich L."/>
            <person name="Liu J."/>
            <person name="Liuni S."/>
            <person name="McWilliam S."/>
            <person name="Madan Babu M."/>
            <person name="Madera M."/>
            <person name="Marchionni L."/>
            <person name="Matsuda H."/>
            <person name="Matsuzawa S."/>
            <person name="Miki H."/>
            <person name="Mignone F."/>
            <person name="Miyake S."/>
            <person name="Morris K."/>
            <person name="Mottagui-Tabar S."/>
            <person name="Mulder N."/>
            <person name="Nakano N."/>
            <person name="Nakauchi H."/>
            <person name="Ng P."/>
            <person name="Nilsson R."/>
            <person name="Nishiguchi S."/>
            <person name="Nishikawa S."/>
            <person name="Nori F."/>
            <person name="Ohara O."/>
            <person name="Okazaki Y."/>
            <person name="Orlando V."/>
            <person name="Pang K.C."/>
            <person name="Pavan W.J."/>
            <person name="Pavesi G."/>
            <person name="Pesole G."/>
            <person name="Petrovsky N."/>
            <person name="Piazza S."/>
            <person name="Reed J."/>
            <person name="Reid J.F."/>
            <person name="Ring B.Z."/>
            <person name="Ringwald M."/>
            <person name="Rost B."/>
            <person name="Ruan Y."/>
            <person name="Salzberg S.L."/>
            <person name="Sandelin A."/>
            <person name="Schneider C."/>
            <person name="Schoenbach C."/>
            <person name="Sekiguchi K."/>
            <person name="Semple C.A."/>
            <person name="Seno S."/>
            <person name="Sessa L."/>
            <person name="Sheng Y."/>
            <person name="Shibata Y."/>
            <person name="Shimada H."/>
            <person name="Shimada K."/>
            <person name="Silva D."/>
            <person name="Sinclair B."/>
            <person name="Sperling S."/>
            <person name="Stupka E."/>
            <person name="Sugiura K."/>
            <person name="Sultana R."/>
            <person name="Takenaka Y."/>
            <person name="Taki K."/>
            <person name="Tammoja K."/>
            <person name="Tan S.L."/>
            <person name="Tang S."/>
            <person name="Taylor M.S."/>
            <person name="Tegner J."/>
            <person name="Teichmann S.A."/>
            <person name="Ueda H.R."/>
            <person name="van Nimwegen E."/>
            <person name="Verardo R."/>
            <person name="Wei C.L."/>
            <person name="Yagi K."/>
            <person name="Yamanishi H."/>
            <person name="Zabarovsky E."/>
            <person name="Zhu S."/>
            <person name="Zimmer A."/>
            <person name="Hide W."/>
            <person name="Bult C."/>
            <person name="Grimmond S.M."/>
            <person name="Teasdale R.D."/>
            <person name="Liu E.T."/>
            <person name="Brusic V."/>
            <person name="Quackenbush J."/>
            <person name="Wahlestedt C."/>
            <person name="Mattick J.S."/>
            <person name="Hume D.A."/>
            <person name="Kai C."/>
            <person name="Sasaki D."/>
            <person name="Tomaru Y."/>
            <person name="Fukuda S."/>
            <person name="Kanamori-Katayama M."/>
            <person name="Suzuki M."/>
            <person name="Aoki J."/>
            <person name="Arakawa T."/>
            <person name="Iida J."/>
            <person name="Imamura K."/>
            <person name="Itoh M."/>
            <person name="Kato T."/>
            <person name="Kawaji H."/>
            <person name="Kawagashira N."/>
            <person name="Kawashima T."/>
            <person name="Kojima M."/>
            <person name="Kondo S."/>
            <person name="Konno H."/>
            <person name="Nakano K."/>
            <person name="Ninomiya N."/>
            <person name="Nishio T."/>
            <person name="Okada M."/>
            <person name="Plessy C."/>
            <person name="Shibata K."/>
            <person name="Shiraki T."/>
            <person name="Suzuki S."/>
            <person name="Tagami M."/>
            <person name="Waki K."/>
            <person name="Watahiki A."/>
            <person name="Okamura-Oho Y."/>
            <person name="Suzuki H."/>
            <person name="Kawai J."/>
            <person name="Hayashizaki Y."/>
        </authorList>
    </citation>
    <scope>NUCLEOTIDE SEQUENCE [LARGE SCALE MRNA] OF 1-685</scope>
    <source>
        <strain>C57BL/6J</strain>
        <tissue>Embryo</tissue>
    </source>
</reference>
<reference key="3">
    <citation type="journal article" date="2005" name="Biol. Reprod.">
        <title>Putative homeodomain transcription factor 1 interacts with the feminization factor homolog fem1b in male germ cells.</title>
        <authorList>
            <person name="Oyhenart J."/>
            <person name="Benichou S."/>
            <person name="Raich N."/>
        </authorList>
    </citation>
    <scope>INTERACTION WITH FEM1B</scope>
</reference>
<reference key="4">
    <citation type="journal article" date="2010" name="Cell">
        <title>A tissue-specific atlas of mouse protein phosphorylation and expression.</title>
        <authorList>
            <person name="Huttlin E.L."/>
            <person name="Jedrychowski M.P."/>
            <person name="Elias J.E."/>
            <person name="Goswami T."/>
            <person name="Rad R."/>
            <person name="Beausoleil S.A."/>
            <person name="Villen J."/>
            <person name="Haas W."/>
            <person name="Sowa M.E."/>
            <person name="Gygi S.P."/>
        </authorList>
    </citation>
    <scope>PHOSPHORYLATION [LARGE SCALE ANALYSIS] AT SER-272; SER-276; SER-277; SER-333 AND SER-335</scope>
    <scope>IDENTIFICATION BY MASS SPECTROMETRY [LARGE SCALE ANALYSIS]</scope>
    <source>
        <tissue>Testis</tissue>
    </source>
</reference>
<dbReference type="EMBL" id="AJ242864">
    <property type="protein sequence ID" value="CAB62242.1"/>
    <property type="molecule type" value="mRNA"/>
</dbReference>
<dbReference type="EMBL" id="AJ133721">
    <property type="protein sequence ID" value="CAB62241.1"/>
    <property type="molecule type" value="mRNA"/>
</dbReference>
<dbReference type="EMBL" id="AK019146">
    <property type="protein sequence ID" value="BAB31567.1"/>
    <property type="molecule type" value="mRNA"/>
</dbReference>
<dbReference type="EMBL" id="AK013292">
    <property type="protein sequence ID" value="BAB28772.2"/>
    <property type="status" value="ALT_SEQ"/>
    <property type="molecule type" value="mRNA"/>
</dbReference>
<dbReference type="CCDS" id="CCDS17698.1"/>
<dbReference type="RefSeq" id="NP_001156939.1">
    <property type="nucleotide sequence ID" value="NM_001163467.1"/>
</dbReference>
<dbReference type="RefSeq" id="NP_001156940.1">
    <property type="nucleotide sequence ID" value="NM_001163468.1"/>
</dbReference>
<dbReference type="RefSeq" id="NP_001156941.1">
    <property type="nucleotide sequence ID" value="NM_001163469.1"/>
</dbReference>
<dbReference type="RefSeq" id="NP_038657.2">
    <property type="nucleotide sequence ID" value="NM_013629.2"/>
</dbReference>
<dbReference type="SMR" id="Q9QZ09"/>
<dbReference type="BioGRID" id="202147">
    <property type="interactions" value="2"/>
</dbReference>
<dbReference type="FunCoup" id="Q9QZ09">
    <property type="interactions" value="1944"/>
</dbReference>
<dbReference type="IntAct" id="Q9QZ09">
    <property type="interactions" value="1"/>
</dbReference>
<dbReference type="STRING" id="10090.ENSMUSP00000066607"/>
<dbReference type="GlyCosmos" id="Q9QZ09">
    <property type="glycosylation" value="6 sites, No reported glycans"/>
</dbReference>
<dbReference type="GlyGen" id="Q9QZ09">
    <property type="glycosylation" value="7 sites"/>
</dbReference>
<dbReference type="iPTMnet" id="Q9QZ09"/>
<dbReference type="PhosphoSitePlus" id="Q9QZ09"/>
<dbReference type="PaxDb" id="10090-ENSMUSP00000066607"/>
<dbReference type="ProteomicsDB" id="289554"/>
<dbReference type="Antibodypedia" id="20143">
    <property type="antibodies" value="32 antibodies from 14 providers"/>
</dbReference>
<dbReference type="DNASU" id="18685"/>
<dbReference type="Ensembl" id="ENSMUST00000063717.14">
    <property type="protein sequence ID" value="ENSMUSP00000066607.8"/>
    <property type="gene ID" value="ENSMUSG00000058388.15"/>
</dbReference>
<dbReference type="Ensembl" id="ENSMUST00000117150.8">
    <property type="protein sequence ID" value="ENSMUSP00000113973.2"/>
    <property type="gene ID" value="ENSMUSG00000058388.15"/>
</dbReference>
<dbReference type="Ensembl" id="ENSMUST00000145727.8">
    <property type="protein sequence ID" value="ENSMUSP00000114722.2"/>
    <property type="gene ID" value="ENSMUSG00000058388.15"/>
</dbReference>
<dbReference type="GeneID" id="18685"/>
<dbReference type="KEGG" id="mmu:18685"/>
<dbReference type="UCSC" id="uc008qtz.1">
    <property type="organism name" value="mouse"/>
</dbReference>
<dbReference type="AGR" id="MGI:1332671"/>
<dbReference type="CTD" id="10745"/>
<dbReference type="MGI" id="MGI:1332671">
    <property type="gene designation" value="Phtf1"/>
</dbReference>
<dbReference type="VEuPathDB" id="HostDB:ENSMUSG00000058388"/>
<dbReference type="eggNOG" id="ENOG502QQGQ">
    <property type="taxonomic scope" value="Eukaryota"/>
</dbReference>
<dbReference type="GeneTree" id="ENSGT00390000011648"/>
<dbReference type="InParanoid" id="Q9QZ09"/>
<dbReference type="OMA" id="KMWQTRE"/>
<dbReference type="OrthoDB" id="10066656at2759"/>
<dbReference type="PhylomeDB" id="Q9QZ09"/>
<dbReference type="TreeFam" id="TF323570"/>
<dbReference type="BioGRID-ORCS" id="18685">
    <property type="hits" value="3 hits in 78 CRISPR screens"/>
</dbReference>
<dbReference type="ChiTaRS" id="Phtf1">
    <property type="organism name" value="mouse"/>
</dbReference>
<dbReference type="PRO" id="PR:Q9QZ09"/>
<dbReference type="Proteomes" id="UP000000589">
    <property type="component" value="Chromosome 3"/>
</dbReference>
<dbReference type="RNAct" id="Q9QZ09">
    <property type="molecule type" value="protein"/>
</dbReference>
<dbReference type="Bgee" id="ENSMUSG00000058388">
    <property type="expression patterns" value="Expressed in spermatocyte and 263 other cell types or tissues"/>
</dbReference>
<dbReference type="ExpressionAtlas" id="Q9QZ09">
    <property type="expression patterns" value="baseline and differential"/>
</dbReference>
<dbReference type="GO" id="GO:0005789">
    <property type="term" value="C:endoplasmic reticulum membrane"/>
    <property type="evidence" value="ECO:0007669"/>
    <property type="project" value="UniProtKB-SubCell"/>
</dbReference>
<dbReference type="GO" id="GO:0005794">
    <property type="term" value="C:Golgi apparatus"/>
    <property type="evidence" value="ECO:0007669"/>
    <property type="project" value="UniProtKB-SubCell"/>
</dbReference>
<dbReference type="InterPro" id="IPR039775">
    <property type="entry name" value="PHTF1/2"/>
</dbReference>
<dbReference type="InterPro" id="IPR021980">
    <property type="entry name" value="PHTF1/2_N"/>
</dbReference>
<dbReference type="PANTHER" id="PTHR12680:SF8">
    <property type="entry name" value="PROTEIN PHTF1"/>
    <property type="match status" value="1"/>
</dbReference>
<dbReference type="PANTHER" id="PTHR12680">
    <property type="entry name" value="PUTATIVE HOMEODOMAIN TRANSCRIPTION FACTOR PHTF"/>
    <property type="match status" value="1"/>
</dbReference>
<dbReference type="Pfam" id="PF12129">
    <property type="entry name" value="PHTF1-2_N"/>
    <property type="match status" value="1"/>
</dbReference>
<gene>
    <name evidence="9" type="primary">Phtf1</name>
    <name evidence="7" type="synonym">Phtf</name>
</gene>